<proteinExistence type="evidence at transcript level"/>
<sequence>MNSNVENLPPHIIRRVYKEVSTLTSDPPEGIKIIPNEEDITDVQVHIEGPEGTPYAAGIFRMKLILGKDFPAAPPKGYFLTKIFHPNVSNNGEICVNVLKKDWKAELGIRHVLLTIKCLLIHPNPESALNEEAGRLLLENYEEYASRAKLMTEIHAQGSTLRGKDPTDPCSSASATVVSGDGPMAKKHAGDRDKKLAAKKKTDKKRALRRL</sequence>
<reference key="1">
    <citation type="submission" date="2003-03" db="EMBL/GenBank/DDBJ databases">
        <title>Molecular cloning of cDNAs encoding Xenopus ubiquitin-conjugating enzyme(E2) and their expression in various Xenopus tissues.</title>
        <authorList>
            <person name="Karasawa A."/>
            <person name="Matushita H."/>
            <person name="Yagura T."/>
        </authorList>
    </citation>
    <scope>NUCLEOTIDE SEQUENCE [MRNA] (ISOFORM 1)</scope>
    <source>
        <tissue>Oocyte</tissue>
    </source>
</reference>
<reference key="2">
    <citation type="submission" date="2008-11" db="EMBL/GenBank/DDBJ databases">
        <authorList>
            <consortium name="NIH - Xenopus Gene Collection (XGC) project"/>
        </authorList>
    </citation>
    <scope>NUCLEOTIDE SEQUENCE [LARGE SCALE MRNA] (ISOFORMS 1 AND 2)</scope>
    <source>
        <tissue>Gastrula</tissue>
    </source>
</reference>
<name>UB2SC_XENLA</name>
<evidence type="ECO:0000255" key="1">
    <source>
        <dbReference type="PROSITE-ProRule" id="PRU00388"/>
    </source>
</evidence>
<evidence type="ECO:0000255" key="2">
    <source>
        <dbReference type="PROSITE-ProRule" id="PRU10133"/>
    </source>
</evidence>
<evidence type="ECO:0000256" key="3">
    <source>
        <dbReference type="SAM" id="MobiDB-lite"/>
    </source>
</evidence>
<evidence type="ECO:0000303" key="4">
    <source ref="2"/>
</evidence>
<protein>
    <recommendedName>
        <fullName>Ubiquitin-conjugating enzyme E2 S-C</fullName>
        <ecNumber>2.3.2.23</ecNumber>
    </recommendedName>
    <alternativeName>
        <fullName>E2 ubiquitin-conjugating enzyme S-C</fullName>
    </alternativeName>
    <alternativeName>
        <fullName>Ubiquitin carrier protein S-C</fullName>
    </alternativeName>
    <alternativeName>
        <fullName>Ubiquitin-protein ligase S-C</fullName>
    </alternativeName>
</protein>
<keyword id="KW-0025">Alternative splicing</keyword>
<keyword id="KW-0067">ATP-binding</keyword>
<keyword id="KW-0131">Cell cycle</keyword>
<keyword id="KW-0132">Cell division</keyword>
<keyword id="KW-0547">Nucleotide-binding</keyword>
<keyword id="KW-1185">Reference proteome</keyword>
<keyword id="KW-0808">Transferase</keyword>
<keyword id="KW-0833">Ubl conjugation pathway</keyword>
<comment type="function">
    <text evidence="1">Catalyzes the covalent attachment of ubiquitin to other proteins. Acts as an essential factor of the anaphase promoting complex/cyclosome (APC/C), a cell cycle-regulated ubiquitin ligase that controls progression through mitosis. Acts by specifically elongating 'Lys-11'-linked polyubiquitin chains initiated by the E2 enzyme ube2c/ubch10 on APC/C substrates, enhancing the degradation of APC/C substrates by the proteasome and promoting mitotic exit.</text>
</comment>
<comment type="catalytic activity">
    <reaction evidence="1 2">
        <text>S-ubiquitinyl-[E1 ubiquitin-activating enzyme]-L-cysteine + [E2 ubiquitin-conjugating enzyme]-L-cysteine = [E1 ubiquitin-activating enzyme]-L-cysteine + S-ubiquitinyl-[E2 ubiquitin-conjugating enzyme]-L-cysteine.</text>
        <dbReference type="EC" id="2.3.2.23"/>
    </reaction>
</comment>
<comment type="pathway">
    <text evidence="1">Protein modification; protein ubiquitination.</text>
</comment>
<comment type="alternative products">
    <event type="alternative splicing"/>
    <isoform>
        <id>Q76EZ2-1</id>
        <name>1</name>
        <sequence type="displayed"/>
    </isoform>
    <isoform>
        <id>Q76EZ2-2</id>
        <name>2</name>
        <sequence type="described" ref="VSP_038532"/>
    </isoform>
</comment>
<comment type="similarity">
    <text evidence="1">Belongs to the ubiquitin-conjugating enzyme family.</text>
</comment>
<gene>
    <name type="primary">ube2s-c</name>
    <name type="synonym">ube2s.2</name>
</gene>
<feature type="chain" id="PRO_0000390433" description="Ubiquitin-conjugating enzyme E2 S-C">
    <location>
        <begin position="1"/>
        <end position="211"/>
    </location>
</feature>
<feature type="domain" description="UBC core" evidence="1">
    <location>
        <begin position="11"/>
        <end position="157"/>
    </location>
</feature>
<feature type="region of interest" description="Disordered" evidence="3">
    <location>
        <begin position="158"/>
        <end position="211"/>
    </location>
</feature>
<feature type="compositionally biased region" description="Basic residues" evidence="3">
    <location>
        <begin position="197"/>
        <end position="211"/>
    </location>
</feature>
<feature type="active site" description="Glycyl thioester intermediate" evidence="1 2">
    <location>
        <position position="95"/>
    </location>
</feature>
<feature type="splice variant" id="VSP_038532" description="In isoform 2." evidence="4">
    <location>
        <begin position="1"/>
        <end position="61"/>
    </location>
</feature>
<organism>
    <name type="scientific">Xenopus laevis</name>
    <name type="common">African clawed frog</name>
    <dbReference type="NCBI Taxonomy" id="8355"/>
    <lineage>
        <taxon>Eukaryota</taxon>
        <taxon>Metazoa</taxon>
        <taxon>Chordata</taxon>
        <taxon>Craniata</taxon>
        <taxon>Vertebrata</taxon>
        <taxon>Euteleostomi</taxon>
        <taxon>Amphibia</taxon>
        <taxon>Batrachia</taxon>
        <taxon>Anura</taxon>
        <taxon>Pipoidea</taxon>
        <taxon>Pipidae</taxon>
        <taxon>Xenopodinae</taxon>
        <taxon>Xenopus</taxon>
        <taxon>Xenopus</taxon>
    </lineage>
</organism>
<dbReference type="EC" id="2.3.2.23"/>
<dbReference type="EMBL" id="AB105547">
    <property type="protein sequence ID" value="BAD06216.1"/>
    <property type="molecule type" value="mRNA"/>
</dbReference>
<dbReference type="EMBL" id="BC169403">
    <property type="protein sequence ID" value="AAI69403.1"/>
    <property type="molecule type" value="mRNA"/>
</dbReference>
<dbReference type="EMBL" id="BC169405">
    <property type="protein sequence ID" value="AAI69405.1"/>
    <property type="molecule type" value="mRNA"/>
</dbReference>
<dbReference type="EMBL" id="BC085030">
    <property type="protein sequence ID" value="AAH85030.1"/>
    <property type="molecule type" value="mRNA"/>
</dbReference>
<dbReference type="RefSeq" id="NP_001084432.1">
    <molecule id="Q76EZ2-1"/>
    <property type="nucleotide sequence ID" value="NM_001090963.1"/>
</dbReference>
<dbReference type="RefSeq" id="XP_018079916.1">
    <molecule id="Q76EZ2-1"/>
    <property type="nucleotide sequence ID" value="XM_018224427.1"/>
</dbReference>
<dbReference type="SMR" id="Q76EZ2"/>
<dbReference type="GeneID" id="403383"/>
<dbReference type="KEGG" id="xla:403383"/>
<dbReference type="AGR" id="Xenbase:XB-GENE-6255548"/>
<dbReference type="CTD" id="403383"/>
<dbReference type="Xenbase" id="XB-GENE-6255548">
    <property type="gene designation" value="ube2s.L"/>
</dbReference>
<dbReference type="OMA" id="HILIVIR"/>
<dbReference type="OrthoDB" id="10069349at2759"/>
<dbReference type="UniPathway" id="UPA00143"/>
<dbReference type="Proteomes" id="UP000186698">
    <property type="component" value="Chromosome 7L"/>
</dbReference>
<dbReference type="Bgee" id="403383">
    <property type="expression patterns" value="Expressed in egg cell and 19 other cell types or tissues"/>
</dbReference>
<dbReference type="GO" id="GO:0005680">
    <property type="term" value="C:anaphase-promoting complex"/>
    <property type="evidence" value="ECO:0000250"/>
    <property type="project" value="UniProtKB"/>
</dbReference>
<dbReference type="GO" id="GO:0005524">
    <property type="term" value="F:ATP binding"/>
    <property type="evidence" value="ECO:0007669"/>
    <property type="project" value="UniProtKB-KW"/>
</dbReference>
<dbReference type="GO" id="GO:0061631">
    <property type="term" value="F:ubiquitin conjugating enzyme activity"/>
    <property type="evidence" value="ECO:0007669"/>
    <property type="project" value="UniProtKB-EC"/>
</dbReference>
<dbReference type="GO" id="GO:0031145">
    <property type="term" value="P:anaphase-promoting complex-dependent catabolic process"/>
    <property type="evidence" value="ECO:0000250"/>
    <property type="project" value="UniProtKB"/>
</dbReference>
<dbReference type="GO" id="GO:0051301">
    <property type="term" value="P:cell division"/>
    <property type="evidence" value="ECO:0007669"/>
    <property type="project" value="UniProtKB-KW"/>
</dbReference>
<dbReference type="GO" id="GO:0010458">
    <property type="term" value="P:exit from mitosis"/>
    <property type="evidence" value="ECO:0000250"/>
    <property type="project" value="UniProtKB"/>
</dbReference>
<dbReference type="GO" id="GO:0010994">
    <property type="term" value="P:free ubiquitin chain polymerization"/>
    <property type="evidence" value="ECO:0000250"/>
    <property type="project" value="UniProtKB"/>
</dbReference>
<dbReference type="GO" id="GO:1904668">
    <property type="term" value="P:positive regulation of ubiquitin protein ligase activity"/>
    <property type="evidence" value="ECO:0000250"/>
    <property type="project" value="UniProtKB"/>
</dbReference>
<dbReference type="GO" id="GO:0070979">
    <property type="term" value="P:protein K11-linked ubiquitination"/>
    <property type="evidence" value="ECO:0000250"/>
    <property type="project" value="UniProtKB"/>
</dbReference>
<dbReference type="CDD" id="cd23804">
    <property type="entry name" value="UBCc_UBE2S"/>
    <property type="match status" value="1"/>
</dbReference>
<dbReference type="FunFam" id="3.10.110.10:FF:000034">
    <property type="entry name" value="Ubiquitin-conjugating enzyme E2 S"/>
    <property type="match status" value="1"/>
</dbReference>
<dbReference type="Gene3D" id="3.10.110.10">
    <property type="entry name" value="Ubiquitin Conjugating Enzyme"/>
    <property type="match status" value="1"/>
</dbReference>
<dbReference type="InterPro" id="IPR050113">
    <property type="entry name" value="Ub_conjugating_enzyme"/>
</dbReference>
<dbReference type="InterPro" id="IPR000608">
    <property type="entry name" value="UBQ-conjugat_E2_core"/>
</dbReference>
<dbReference type="InterPro" id="IPR023313">
    <property type="entry name" value="UBQ-conjugating_AS"/>
</dbReference>
<dbReference type="InterPro" id="IPR016135">
    <property type="entry name" value="UBQ-conjugating_enzyme/RWD"/>
</dbReference>
<dbReference type="PANTHER" id="PTHR24067">
    <property type="entry name" value="UBIQUITIN-CONJUGATING ENZYME E2"/>
    <property type="match status" value="1"/>
</dbReference>
<dbReference type="Pfam" id="PF00179">
    <property type="entry name" value="UQ_con"/>
    <property type="match status" value="1"/>
</dbReference>
<dbReference type="SMART" id="SM00212">
    <property type="entry name" value="UBCc"/>
    <property type="match status" value="1"/>
</dbReference>
<dbReference type="SUPFAM" id="SSF54495">
    <property type="entry name" value="UBC-like"/>
    <property type="match status" value="1"/>
</dbReference>
<dbReference type="PROSITE" id="PS00183">
    <property type="entry name" value="UBC_1"/>
    <property type="match status" value="1"/>
</dbReference>
<dbReference type="PROSITE" id="PS50127">
    <property type="entry name" value="UBC_2"/>
    <property type="match status" value="1"/>
</dbReference>
<accession>Q76EZ2</accession>
<accession>Q5U4M8</accession>